<organism>
    <name type="scientific">Escherichia coli (strain ATCC 9637 / CCM 2024 / DSM 1116 / LMG 11080 / NBRC 13500 / NCIMB 8666 / NRRL B-766 / W)</name>
    <dbReference type="NCBI Taxonomy" id="566546"/>
    <lineage>
        <taxon>Bacteria</taxon>
        <taxon>Pseudomonadati</taxon>
        <taxon>Pseudomonadota</taxon>
        <taxon>Gammaproteobacteria</taxon>
        <taxon>Enterobacterales</taxon>
        <taxon>Enterobacteriaceae</taxon>
        <taxon>Escherichia</taxon>
    </lineage>
</organism>
<sequence length="126" mass="13834">MIRTMLQGKLHRVKVTHADLHYEGSCAIDQDFLDAAGILENEAIDIWNVTNGKRFSTYAIAAERGSRIISVNGAAAHCASVGDIVIIASFVTMPDEEARTWRPNVAYFEGDNEMKRTAKAIPVQVA</sequence>
<dbReference type="EC" id="4.1.1.11"/>
<dbReference type="EMBL" id="AEDF01000005">
    <property type="protein sequence ID" value="EFN38897.1"/>
    <property type="molecule type" value="Genomic_DNA"/>
</dbReference>
<dbReference type="EMBL" id="CP002185">
    <property type="protein sequence ID" value="ADT73678.1"/>
    <property type="molecule type" value="Genomic_DNA"/>
</dbReference>
<dbReference type="EMBL" id="CP002967">
    <property type="protein sequence ID" value="AFH09795.1"/>
    <property type="molecule type" value="Genomic_DNA"/>
</dbReference>
<dbReference type="RefSeq" id="WP_000621515.1">
    <property type="nucleotide sequence ID" value="NZ_WBMH01000004.1"/>
</dbReference>
<dbReference type="SMR" id="P0C7I4"/>
<dbReference type="GeneID" id="93777305"/>
<dbReference type="KEGG" id="ell:WFL_00630"/>
<dbReference type="KEGG" id="elw:ECW_m0128"/>
<dbReference type="PATRIC" id="fig|566546.30.peg.132"/>
<dbReference type="HOGENOM" id="CLU_115305_2_1_6"/>
<dbReference type="SABIO-RK" id="P0C7I4"/>
<dbReference type="UniPathway" id="UPA00028">
    <property type="reaction ID" value="UER00002"/>
</dbReference>
<dbReference type="Proteomes" id="UP000008525">
    <property type="component" value="Chromosome"/>
</dbReference>
<dbReference type="GO" id="GO:0005829">
    <property type="term" value="C:cytosol"/>
    <property type="evidence" value="ECO:0007669"/>
    <property type="project" value="TreeGrafter"/>
</dbReference>
<dbReference type="GO" id="GO:0004068">
    <property type="term" value="F:aspartate 1-decarboxylase activity"/>
    <property type="evidence" value="ECO:0007669"/>
    <property type="project" value="UniProtKB-UniRule"/>
</dbReference>
<dbReference type="GO" id="GO:0006523">
    <property type="term" value="P:alanine biosynthetic process"/>
    <property type="evidence" value="ECO:0007669"/>
    <property type="project" value="InterPro"/>
</dbReference>
<dbReference type="GO" id="GO:0015940">
    <property type="term" value="P:pantothenate biosynthetic process"/>
    <property type="evidence" value="ECO:0007669"/>
    <property type="project" value="UniProtKB-UniRule"/>
</dbReference>
<dbReference type="CDD" id="cd06919">
    <property type="entry name" value="Asp_decarbox"/>
    <property type="match status" value="1"/>
</dbReference>
<dbReference type="FunFam" id="2.40.40.20:FF:000004">
    <property type="entry name" value="Aspartate 1-decarboxylase"/>
    <property type="match status" value="1"/>
</dbReference>
<dbReference type="Gene3D" id="2.40.40.20">
    <property type="match status" value="1"/>
</dbReference>
<dbReference type="HAMAP" id="MF_00446">
    <property type="entry name" value="PanD"/>
    <property type="match status" value="1"/>
</dbReference>
<dbReference type="InterPro" id="IPR009010">
    <property type="entry name" value="Asp_de-COase-like_dom_sf"/>
</dbReference>
<dbReference type="InterPro" id="IPR003190">
    <property type="entry name" value="Asp_decarbox"/>
</dbReference>
<dbReference type="NCBIfam" id="TIGR00223">
    <property type="entry name" value="panD"/>
    <property type="match status" value="1"/>
</dbReference>
<dbReference type="PANTHER" id="PTHR21012">
    <property type="entry name" value="ASPARTATE 1-DECARBOXYLASE"/>
    <property type="match status" value="1"/>
</dbReference>
<dbReference type="PANTHER" id="PTHR21012:SF0">
    <property type="entry name" value="ASPARTATE 1-DECARBOXYLASE"/>
    <property type="match status" value="1"/>
</dbReference>
<dbReference type="Pfam" id="PF02261">
    <property type="entry name" value="Asp_decarbox"/>
    <property type="match status" value="1"/>
</dbReference>
<dbReference type="PIRSF" id="PIRSF006246">
    <property type="entry name" value="Asp_decarbox"/>
    <property type="match status" value="1"/>
</dbReference>
<dbReference type="SUPFAM" id="SSF50692">
    <property type="entry name" value="ADC-like"/>
    <property type="match status" value="1"/>
</dbReference>
<reference key="1">
    <citation type="submission" date="2010-07" db="EMBL/GenBank/DDBJ databases">
        <title>The draft genome of Escherichia coli W.</title>
        <authorList>
            <consortium name="US DOE Joint Genome Institute (JGI-PGF)"/>
            <person name="Lucas S."/>
            <person name="Copeland A."/>
            <person name="Lapidus A."/>
            <person name="Cheng J.-F."/>
            <person name="Bruce D."/>
            <person name="Goodwin L."/>
            <person name="Pitluck S."/>
            <person name="Land M.L."/>
            <person name="Hauser L."/>
            <person name="Chang Y.-J."/>
            <person name="Jeffries C."/>
            <person name="Tremaine M."/>
            <person name="Landick R."/>
            <person name="Keating D."/>
            <person name="Woyke T.J."/>
        </authorList>
    </citation>
    <scope>NUCLEOTIDE SEQUENCE [LARGE SCALE GENOMIC DNA]</scope>
    <source>
        <strain>ATCC 9637 / CCM 2024 / DSM 1116 / LMG 11080 / NBRC 13500 / NCIMB 8666 / NRRL B-766 / W</strain>
    </source>
</reference>
<reference key="2">
    <citation type="journal article" date="2011" name="BMC Genomics">
        <title>The genome sequence of E. coli W (ATCC 9637): comparative genome analysis and an improved genome-scale reconstruction of E. coli.</title>
        <authorList>
            <person name="Archer C.T."/>
            <person name="Kim J.F."/>
            <person name="Jeong H."/>
            <person name="Park J.H."/>
            <person name="Vickers C.E."/>
            <person name="Lee S.Y."/>
            <person name="Nielsen L.K."/>
        </authorList>
    </citation>
    <scope>NUCLEOTIDE SEQUENCE [LARGE SCALE GENOMIC DNA]</scope>
    <source>
        <strain>ATCC 9637 / CCM 2024 / DSM 1116 / LMG 11080 / NBRC 13500 / NCIMB 8666 / NRRL B-766 / W</strain>
    </source>
</reference>
<reference key="3">
    <citation type="journal article" date="2012" name="J. Ind. Microbiol. Biotechnol.">
        <title>Optical mapping and sequencing of the Escherichia coli KO11 genome reveal extensive chromosomal rearrangements, and multiple tandem copies of the Zymomonas mobilis pdc and adhB genes.</title>
        <authorList>
            <person name="Turner P.C."/>
            <person name="Yomano L.P."/>
            <person name="Jarboe L.R."/>
            <person name="York S.W."/>
            <person name="Baggett C.L."/>
            <person name="Moritz B.E."/>
            <person name="Zentz E.B."/>
            <person name="Shanmugam K.T."/>
            <person name="Ingram L.O."/>
        </authorList>
    </citation>
    <scope>NUCLEOTIDE SEQUENCE [LARGE SCALE GENOMIC DNA]</scope>
    <source>
        <strain>ATCC 9637 / CCM 2024 / DSM 1116 / LMG 11080 / NBRC 13500 / NCIMB 8666 / NRRL B-766 / W</strain>
    </source>
</reference>
<reference key="4">
    <citation type="journal article" date="1979" name="J. Biol. Chem.">
        <title>Purification and properties of L-aspartate-alpha-decarboxylase, an enzyme that catalyzes the formation of beta-alanine in Escherichia coli.</title>
        <authorList>
            <person name="Williamson J.M."/>
            <person name="Brown G.M."/>
        </authorList>
    </citation>
    <scope>FUNCTION</scope>
    <scope>COFACTOR</scope>
    <scope>ACTIVITY REGULATION</scope>
    <scope>CATALYTIC ACTIVITY</scope>
    <scope>BIOPHYSICOCHEMICAL PROPERTIES</scope>
    <source>
        <strain>ATCC 9637 / CCM 2024 / DSM 1116 / LMG 11080 / NBRC 13500 / NCIMB 8666 / NRRL B-766 / W</strain>
    </source>
</reference>
<reference key="5">
    <citation type="journal article" date="2004" name="Anal. Biochem.">
        <title>Tools for metabolic engineering in Escherichia coli: inactivation of panD by a point mutation.</title>
        <authorList>
            <person name="Kennedy J."/>
            <person name="Kealey J.T."/>
        </authorList>
    </citation>
    <scope>MUTAGENESIS OF SER-25</scope>
    <source>
        <strain>B / BL21-DE3</strain>
    </source>
</reference>
<evidence type="ECO:0000250" key="1"/>
<evidence type="ECO:0000269" key="2">
    <source>
    </source>
</evidence>
<evidence type="ECO:0000269" key="3">
    <source>
    </source>
</evidence>
<evidence type="ECO:0000305" key="4"/>
<comment type="function">
    <text evidence="3">Catalyzes the pyruvoyl-dependent decarboxylation of aspartate to produce beta-alanine.</text>
</comment>
<comment type="catalytic activity">
    <reaction evidence="3">
        <text>L-aspartate + H(+) = beta-alanine + CO2</text>
        <dbReference type="Rhea" id="RHEA:19497"/>
        <dbReference type="ChEBI" id="CHEBI:15378"/>
        <dbReference type="ChEBI" id="CHEBI:16526"/>
        <dbReference type="ChEBI" id="CHEBI:29991"/>
        <dbReference type="ChEBI" id="CHEBI:57966"/>
        <dbReference type="EC" id="4.1.1.11"/>
    </reaction>
</comment>
<comment type="cofactor">
    <cofactor evidence="3">
        <name>pyruvate</name>
        <dbReference type="ChEBI" id="CHEBI:15361"/>
    </cofactor>
    <text evidence="3">Binds 1 pyruvoyl group covalently per subunit.</text>
</comment>
<comment type="activity regulation">
    <text evidence="3">Inhibited by hydroxylamine, phenylhydrazine, sodium borohydride, D-cycloserine, hydrazine, semicarbazine and succinic dehydrazine. L-glutamate, succinate, oxaloacetate, L-serine, L-cysteic acid, beta-hydroxy-DL-aspartate, and D-serine are competitive inhibitors.</text>
</comment>
<comment type="biophysicochemical properties">
    <kinetics>
        <KM evidence="3">80 uM for L-aspartate (at pH 6.8 and 37 degrees Celsius)</KM>
        <KM evidence="3">160 uM for L-aspartate (at pH 7.5)</KM>
    </kinetics>
    <phDependence>
        <text evidence="3">Optimum pH is about 7.5. The reaction rates at the pH values of 6.8 and 8.0 are about 60% of the pH 7.5 rate.</text>
    </phDependence>
    <temperatureDependence>
        <text evidence="3">Optimum temperature is 55 degrees Celsius. The half-maximal activity is reached at 26 degrees Celsius and 78 degrees Celsius.</text>
    </temperatureDependence>
</comment>
<comment type="pathway">
    <text>Cofactor biosynthesis; (R)-pantothenate biosynthesis; beta-alanine from L-aspartate: step 1/1.</text>
</comment>
<comment type="subunit">
    <text evidence="1">Heterooctamer of four alpha and four beta subunits.</text>
</comment>
<comment type="subcellular location">
    <subcellularLocation>
        <location evidence="1">Cytoplasm</location>
    </subcellularLocation>
</comment>
<comment type="PTM">
    <text evidence="1">Is synthesized initially as an inactive proenzyme, which is activated by self-cleavage at a specific serine bond to produce a beta-subunit with a hydroxyl group at its C-terminus and an alpha-subunit with a pyruvoyl group at its N-terminus.</text>
</comment>
<comment type="similarity">
    <text evidence="4">Belongs to the PanD family.</text>
</comment>
<accession>P0C7I4</accession>
<accession>E0IYQ0</accession>
<accession>H9XX93</accession>
<proteinExistence type="evidence at protein level"/>
<gene>
    <name type="primary">panD</name>
    <name type="ordered locus">ECW_m0128</name>
    <name type="ordered locus">WFL_00630</name>
    <name type="ORF">EschWDRAFT_1457</name>
</gene>
<name>PAND_ECOLW</name>
<protein>
    <recommendedName>
        <fullName>Aspartate 1-decarboxylase</fullName>
        <ecNumber>4.1.1.11</ecNumber>
    </recommendedName>
    <alternativeName>
        <fullName>Aspartate alpha-decarboxylase</fullName>
    </alternativeName>
    <component>
        <recommendedName>
            <fullName>Aspartate 1-decarboxylase beta chain</fullName>
        </recommendedName>
    </component>
    <component>
        <recommendedName>
            <fullName>Aspartate 1-decarboxylase alpha chain</fullName>
        </recommendedName>
    </component>
</protein>
<keyword id="KW-0068">Autocatalytic cleavage</keyword>
<keyword id="KW-0963">Cytoplasm</keyword>
<keyword id="KW-0210">Decarboxylase</keyword>
<keyword id="KW-0456">Lyase</keyword>
<keyword id="KW-0566">Pantothenate biosynthesis</keyword>
<keyword id="KW-0670">Pyruvate</keyword>
<keyword id="KW-0704">Schiff base</keyword>
<keyword id="KW-0865">Zymogen</keyword>
<feature type="chain" id="PRO_0000337755" description="Aspartate 1-decarboxylase beta chain">
    <location>
        <begin position="1"/>
        <end position="24"/>
    </location>
</feature>
<feature type="chain" id="PRO_0000337756" description="Aspartate 1-decarboxylase alpha chain">
    <location>
        <begin position="25"/>
        <end position="126"/>
    </location>
</feature>
<feature type="active site" description="Schiff-base intermediate with substrate; via pyruvic acid">
    <location>
        <position position="25"/>
    </location>
</feature>
<feature type="active site" description="Proton donor">
    <location>
        <position position="58"/>
    </location>
</feature>
<feature type="binding site" evidence="1">
    <location>
        <position position="57"/>
    </location>
    <ligand>
        <name>substrate</name>
    </ligand>
</feature>
<feature type="binding site" evidence="1">
    <location>
        <begin position="73"/>
        <end position="75"/>
    </location>
    <ligand>
        <name>substrate</name>
    </ligand>
</feature>
<feature type="modified residue" description="Pyruvic acid (Ser)" evidence="1">
    <location>
        <position position="25"/>
    </location>
</feature>
<feature type="mutagenesis site" description="Inactive and incapable of self-cleavage." evidence="2">
    <original>S</original>
    <variation>A</variation>
    <location>
        <position position="25"/>
    </location>
</feature>